<organism>
    <name type="scientific">Rattus norvegicus</name>
    <name type="common">Rat</name>
    <dbReference type="NCBI Taxonomy" id="10116"/>
    <lineage>
        <taxon>Eukaryota</taxon>
        <taxon>Metazoa</taxon>
        <taxon>Chordata</taxon>
        <taxon>Craniata</taxon>
        <taxon>Vertebrata</taxon>
        <taxon>Euteleostomi</taxon>
        <taxon>Mammalia</taxon>
        <taxon>Eutheria</taxon>
        <taxon>Euarchontoglires</taxon>
        <taxon>Glires</taxon>
        <taxon>Rodentia</taxon>
        <taxon>Myomorpha</taxon>
        <taxon>Muroidea</taxon>
        <taxon>Muridae</taxon>
        <taxon>Murinae</taxon>
        <taxon>Rattus</taxon>
    </lineage>
</organism>
<feature type="chain" id="PRO_0000277625" description="GPI inositol-deacylase">
    <location>
        <begin position="1"/>
        <end position="922"/>
    </location>
</feature>
<feature type="topological domain" description="Cytoplasmic" evidence="3">
    <location>
        <begin position="1"/>
        <end position="11"/>
    </location>
</feature>
<feature type="transmembrane region" description="Helical" evidence="1">
    <location>
        <begin position="12"/>
        <end position="32"/>
    </location>
</feature>
<feature type="topological domain" description="Lumenal" evidence="3">
    <location>
        <begin position="33"/>
        <end position="597"/>
    </location>
</feature>
<feature type="transmembrane region" description="Helical" evidence="1">
    <location>
        <begin position="598"/>
        <end position="618"/>
    </location>
</feature>
<feature type="topological domain" description="Cytoplasmic" evidence="5">
    <location>
        <begin position="619"/>
        <end position="641"/>
    </location>
</feature>
<feature type="transmembrane region" description="Helical" evidence="1">
    <location>
        <begin position="642"/>
        <end position="662"/>
    </location>
</feature>
<feature type="topological domain" description="Lumenal" evidence="5">
    <location>
        <begin position="663"/>
        <end position="668"/>
    </location>
</feature>
<feature type="transmembrane region" description="Helical" evidence="1">
    <location>
        <begin position="669"/>
        <end position="689"/>
    </location>
</feature>
<feature type="topological domain" description="Cytoplasmic" evidence="5">
    <location>
        <begin position="690"/>
        <end position="694"/>
    </location>
</feature>
<feature type="transmembrane region" description="Helical" evidence="1">
    <location>
        <begin position="695"/>
        <end position="715"/>
    </location>
</feature>
<feature type="topological domain" description="Lumenal" evidence="5">
    <location>
        <begin position="716"/>
        <end position="733"/>
    </location>
</feature>
<feature type="transmembrane region" description="Helical" evidence="1">
    <location>
        <begin position="734"/>
        <end position="754"/>
    </location>
</feature>
<feature type="topological domain" description="Cytoplasmic" evidence="5">
    <location>
        <begin position="755"/>
        <end position="816"/>
    </location>
</feature>
<feature type="transmembrane region" description="Helical" evidence="1">
    <location>
        <begin position="817"/>
        <end position="837"/>
    </location>
</feature>
<feature type="topological domain" description="Lumenal" evidence="5">
    <location>
        <begin position="838"/>
        <end position="853"/>
    </location>
</feature>
<feature type="transmembrane region" description="Helical" evidence="1">
    <location>
        <begin position="854"/>
        <end position="874"/>
    </location>
</feature>
<feature type="topological domain" description="Cytoplasmic" evidence="5">
    <location>
        <begin position="875"/>
        <end position="894"/>
    </location>
</feature>
<feature type="transmembrane region" description="Helical" evidence="1">
    <location>
        <begin position="895"/>
        <end position="915"/>
    </location>
</feature>
<feature type="topological domain" description="Lumenal" evidence="5">
    <location>
        <begin position="916"/>
        <end position="922"/>
    </location>
</feature>
<feature type="region of interest" description="Disordered" evidence="2">
    <location>
        <begin position="776"/>
        <end position="801"/>
    </location>
</feature>
<feature type="compositionally biased region" description="Basic residues" evidence="2">
    <location>
        <begin position="782"/>
        <end position="793"/>
    </location>
</feature>
<feature type="active site" evidence="5">
    <location>
        <position position="174"/>
    </location>
</feature>
<feature type="glycosylation site" description="N-linked (GlcNAc...) asparagine" evidence="1">
    <location>
        <position position="363"/>
    </location>
</feature>
<feature type="glycosylation site" description="N-linked (GlcNAc...) asparagine" evidence="1">
    <location>
        <position position="402"/>
    </location>
</feature>
<feature type="glycosylation site" description="N-linked (GlcNAc...) asparagine" evidence="7">
    <location>
        <position position="558"/>
    </location>
</feature>
<feature type="mutagenesis site" description="Abolishes the inositol deacylation of GPI-anchor proteins." evidence="3">
    <original>S</original>
    <variation>A</variation>
    <location>
        <position position="174"/>
    </location>
</feature>
<evidence type="ECO:0000255" key="1"/>
<evidence type="ECO:0000256" key="2">
    <source>
        <dbReference type="SAM" id="MobiDB-lite"/>
    </source>
</evidence>
<evidence type="ECO:0000269" key="3">
    <source>
    </source>
</evidence>
<evidence type="ECO:0000305" key="4"/>
<evidence type="ECO:0000305" key="5">
    <source>
    </source>
</evidence>
<evidence type="ECO:0000312" key="6">
    <source>
        <dbReference type="RGD" id="1303213"/>
    </source>
</evidence>
<evidence type="ECO:0007744" key="7">
    <source>
    </source>
</evidence>
<name>PGAP1_RAT</name>
<sequence length="922" mass="104384">MFLHSVNLWNLAFYVFMVFLATLGLWDVFFGFEENKCSMSYMFEYPEYQKIELPKKLTKRYPAYELYLYGEGSYAEEHKILPLTGIPVLFLPGNAGSYKQVRSIGSIALRKAEDIDFKYHFDFFSVNFNEELVALYGGSLQKQTKFVHECIKAILKLYKGQEFPPTSVAIIGHSMGGLVARALLTLKNFKQDLINLLVTQATPHVAPVMPLDRFITEFYMTVNNYWILNARHINLTTLSVAGGFRDYQVRSGLTFLPTLSHHTSALSVVTSAVPKTWVSTDHLSIVWCKQLQLTTIRAFFDLIDADTKQITQKSKKKLSVLNHHFIRHPAKQFEENPSIISDLTGTSMWVPVKVSRWSYVAYNESDKIYFAFPLANHRKVYTHAYCQSTMLDTNSWIFGCINSTSMCRQGVDLSWKAELLPTIKSLTLRLQDYPSLSHIVVYVPSVHGSKFVVDCEFFKKEARSIQLPVTHLFSFGLSSRKAIINTSGRYYNIELLNLGQIYQAFKVNVVSKCTGGKEEITSIYKLHIPWSYEDSLTIAQVPSSVDISLKLHVAQPENDSHVALLKMYTSSDCQYEVTIKTSFPQILGQVVRFHGGALPAYVVSSILLAYGGQLYSLLSTGFCLEYGTMLDKEAKPYKVDPFVIMIKFLLGYKWFKELWDAVLLPELDAIVLTSQSMCFPLVSLILFLFGTCTAYWSGLLSSASVQLLSSLWLALKRPAELPKDVKVMSPDLPVLTVVFLIISWTTCGALAILLSYLYYVFKVVHLQASLTTFKNNQPVNPKHSRRSEKKSNHHKDSAIQNPRLSANDAEDSLRMHSTVINLLTWVVLLSMPSLIYWSKNLRYYFKLNPDPCKPLAFLLIPAIAVLGNTHTVSIKSSKLLKTASQFPLPLAVGVIAFGSSHLYRVPCFVIIPLVFHSLCNFM</sequence>
<gene>
    <name evidence="6" type="primary">Pgap1</name>
</gene>
<accession>Q765A7</accession>
<dbReference type="EC" id="3.1.-.-" evidence="3"/>
<dbReference type="EMBL" id="AB116149">
    <property type="protein sequence ID" value="BAD08353.1"/>
    <property type="molecule type" value="mRNA"/>
</dbReference>
<dbReference type="RefSeq" id="NP_973719.1">
    <property type="nucleotide sequence ID" value="NM_201990.1"/>
</dbReference>
<dbReference type="SMR" id="Q765A7"/>
<dbReference type="FunCoup" id="Q765A7">
    <property type="interactions" value="2692"/>
</dbReference>
<dbReference type="STRING" id="10116.ENSRNOP00000017967"/>
<dbReference type="ESTHER" id="ratno-q765a7">
    <property type="family name" value="PGAP1"/>
</dbReference>
<dbReference type="GlyCosmos" id="Q765A7">
    <property type="glycosylation" value="3 sites, 9 glycans"/>
</dbReference>
<dbReference type="GlyGen" id="Q765A7">
    <property type="glycosylation" value="4 sites, 9 N-linked glycans (1 site), 1 O-linked glycan (1 site)"/>
</dbReference>
<dbReference type="iPTMnet" id="Q765A7"/>
<dbReference type="PhosphoSitePlus" id="Q765A7"/>
<dbReference type="SwissPalm" id="Q765A7"/>
<dbReference type="PaxDb" id="10116-ENSRNOP00000017967"/>
<dbReference type="Ensembl" id="ENSRNOT00000017967.6">
    <property type="protein sequence ID" value="ENSRNOP00000017967.4"/>
    <property type="gene ID" value="ENSRNOG00000013388.6"/>
</dbReference>
<dbReference type="GeneID" id="316400"/>
<dbReference type="KEGG" id="rno:316400"/>
<dbReference type="AGR" id="RGD:1303213"/>
<dbReference type="CTD" id="80055"/>
<dbReference type="RGD" id="1303213">
    <property type="gene designation" value="Pgap1"/>
</dbReference>
<dbReference type="eggNOG" id="KOG3724">
    <property type="taxonomic scope" value="Eukaryota"/>
</dbReference>
<dbReference type="GeneTree" id="ENSGT00390000016484"/>
<dbReference type="HOGENOM" id="CLU_013735_1_0_1"/>
<dbReference type="InParanoid" id="Q765A7"/>
<dbReference type="OrthoDB" id="348976at2759"/>
<dbReference type="PhylomeDB" id="Q765A7"/>
<dbReference type="TreeFam" id="TF314565"/>
<dbReference type="Reactome" id="R-RNO-162791">
    <property type="pathway name" value="Attachment of GPI anchor to uPAR"/>
</dbReference>
<dbReference type="PRO" id="PR:Q765A7"/>
<dbReference type="Proteomes" id="UP000002494">
    <property type="component" value="Chromosome 9"/>
</dbReference>
<dbReference type="Bgee" id="ENSRNOG00000013388">
    <property type="expression patterns" value="Expressed in duodenum and 19 other cell types or tissues"/>
</dbReference>
<dbReference type="GO" id="GO:0005783">
    <property type="term" value="C:endoplasmic reticulum"/>
    <property type="evidence" value="ECO:0000314"/>
    <property type="project" value="UniProtKB"/>
</dbReference>
<dbReference type="GO" id="GO:0005789">
    <property type="term" value="C:endoplasmic reticulum membrane"/>
    <property type="evidence" value="ECO:0007669"/>
    <property type="project" value="UniProtKB-SubCell"/>
</dbReference>
<dbReference type="GO" id="GO:0160215">
    <property type="term" value="F:deacylase activity"/>
    <property type="evidence" value="ECO:0000315"/>
    <property type="project" value="UniProtKB"/>
</dbReference>
<dbReference type="GO" id="GO:0050185">
    <property type="term" value="F:phosphatidylinositol deacylase activity"/>
    <property type="evidence" value="ECO:0000318"/>
    <property type="project" value="GO_Central"/>
</dbReference>
<dbReference type="GO" id="GO:0009948">
    <property type="term" value="P:anterior/posterior axis specification"/>
    <property type="evidence" value="ECO:0000266"/>
    <property type="project" value="RGD"/>
</dbReference>
<dbReference type="GO" id="GO:0009880">
    <property type="term" value="P:embryonic pattern specification"/>
    <property type="evidence" value="ECO:0000266"/>
    <property type="project" value="RGD"/>
</dbReference>
<dbReference type="GO" id="GO:0021871">
    <property type="term" value="P:forebrain regionalization"/>
    <property type="evidence" value="ECO:0000266"/>
    <property type="project" value="RGD"/>
</dbReference>
<dbReference type="GO" id="GO:0006506">
    <property type="term" value="P:GPI anchor biosynthetic process"/>
    <property type="evidence" value="ECO:0000315"/>
    <property type="project" value="RGD"/>
</dbReference>
<dbReference type="GO" id="GO:0060322">
    <property type="term" value="P:head development"/>
    <property type="evidence" value="ECO:0000266"/>
    <property type="project" value="RGD"/>
</dbReference>
<dbReference type="GO" id="GO:1902953">
    <property type="term" value="P:positive regulation of ER to Golgi vesicle-mediated transport"/>
    <property type="evidence" value="ECO:0000315"/>
    <property type="project" value="UniProtKB"/>
</dbReference>
<dbReference type="GO" id="GO:0015031">
    <property type="term" value="P:protein transport"/>
    <property type="evidence" value="ECO:0007669"/>
    <property type="project" value="UniProtKB-KW"/>
</dbReference>
<dbReference type="GO" id="GO:0007605">
    <property type="term" value="P:sensory perception of sound"/>
    <property type="evidence" value="ECO:0000266"/>
    <property type="project" value="RGD"/>
</dbReference>
<dbReference type="FunFam" id="3.40.50.1820:FF:000026">
    <property type="entry name" value="GPI inositol-deacylase"/>
    <property type="match status" value="1"/>
</dbReference>
<dbReference type="Gene3D" id="3.40.50.1820">
    <property type="entry name" value="alpha/beta hydrolase"/>
    <property type="match status" value="1"/>
</dbReference>
<dbReference type="InterPro" id="IPR029058">
    <property type="entry name" value="AB_hydrolase_fold"/>
</dbReference>
<dbReference type="InterPro" id="IPR012908">
    <property type="entry name" value="PGAP1-ab_dom-like"/>
</dbReference>
<dbReference type="InterPro" id="IPR039529">
    <property type="entry name" value="PGAP1/BST1"/>
</dbReference>
<dbReference type="InterPro" id="IPR056824">
    <property type="entry name" value="PGAP1_TMD"/>
</dbReference>
<dbReference type="PANTHER" id="PTHR15495:SF7">
    <property type="entry name" value="GPI INOSITOL-DEACYLASE"/>
    <property type="match status" value="1"/>
</dbReference>
<dbReference type="PANTHER" id="PTHR15495">
    <property type="entry name" value="NEGATIVE REGULATOR OF VESICLE FORMATION-RELATED"/>
    <property type="match status" value="1"/>
</dbReference>
<dbReference type="Pfam" id="PF07819">
    <property type="entry name" value="PGAP1"/>
    <property type="match status" value="1"/>
</dbReference>
<dbReference type="Pfam" id="PF25141">
    <property type="entry name" value="PGAP1_2nd"/>
    <property type="match status" value="1"/>
</dbReference>
<dbReference type="Pfam" id="PF24660">
    <property type="entry name" value="PGAP1_3rd"/>
    <property type="match status" value="1"/>
</dbReference>
<dbReference type="Pfam" id="PF25140">
    <property type="entry name" value="PGAP1_TMD"/>
    <property type="match status" value="1"/>
</dbReference>
<dbReference type="SUPFAM" id="SSF53474">
    <property type="entry name" value="alpha/beta-Hydrolases"/>
    <property type="match status" value="1"/>
</dbReference>
<dbReference type="PROSITE" id="PS00120">
    <property type="entry name" value="LIPASE_SER"/>
    <property type="match status" value="1"/>
</dbReference>
<reference key="1">
    <citation type="journal article" date="2004" name="J. Biol. Chem.">
        <title>Inositol deacylation of glycosylphosphatidylinositol-anchored proteins is mediated by mammalian PGAP1 and yeast Bst1p.</title>
        <authorList>
            <person name="Tanaka S."/>
            <person name="Maeda Y."/>
            <person name="Tashima Y."/>
            <person name="Kinoshita T."/>
        </authorList>
    </citation>
    <scope>NUCLEOTIDE SEQUENCE [MRNA]</scope>
    <scope>FUNCTION</scope>
    <scope>CATALYTIC ACTIVITY</scope>
    <scope>SUBCELLULAR LOCATION</scope>
    <scope>TOPOLOGY</scope>
    <scope>MUTAGENESIS OF SER-174</scope>
</reference>
<reference key="2">
    <citation type="journal article" date="2013" name="J. Proteome Res.">
        <title>Site-specific glycan-peptide analysis for determination of N-glycoproteome heterogeneity.</title>
        <authorList>
            <person name="Parker B.L."/>
            <person name="Thaysen-Andersen M."/>
            <person name="Solis N."/>
            <person name="Scott N.E."/>
            <person name="Larsen M.R."/>
            <person name="Graham M.E."/>
            <person name="Packer N.H."/>
            <person name="Cordwell S.J."/>
        </authorList>
    </citation>
    <scope>GLYCOSYLATION [LARGE SCALE ANALYSIS] AT ASN-558</scope>
    <scope>IDENTIFICATION BY MASS SPECTROMETRY [LARGE SCALE ANALYSIS]</scope>
    <source>
        <tissue>Brain</tissue>
    </source>
</reference>
<comment type="function">
    <text evidence="3">GPI inositol-deacylase that catalyzes the remove of the acyl chain linked to the 2-OH position of inositol ring from the GPI-anchored protein (GPI-AP) in the endoplasmic reticulum (PubMed:14734546). Initiates the post-attachment remodeling phase of GPI-AP biogenesis and participates in endoplasmic reticulum (ER)-to-Golgi transport of GPI-anchored protein (PubMed:14734546).</text>
</comment>
<comment type="subcellular location">
    <subcellularLocation>
        <location evidence="3">Endoplasmic reticulum membrane</location>
        <topology evidence="3">Multi-pass membrane protein</topology>
    </subcellularLocation>
</comment>
<comment type="similarity">
    <text evidence="4">Belongs to the GPI inositol-deacylase family.</text>
</comment>
<proteinExistence type="evidence at protein level"/>
<keyword id="KW-0256">Endoplasmic reticulum</keyword>
<keyword id="KW-0325">Glycoprotein</keyword>
<keyword id="KW-0378">Hydrolase</keyword>
<keyword id="KW-0472">Membrane</keyword>
<keyword id="KW-0653">Protein transport</keyword>
<keyword id="KW-1185">Reference proteome</keyword>
<keyword id="KW-0812">Transmembrane</keyword>
<keyword id="KW-1133">Transmembrane helix</keyword>
<keyword id="KW-0813">Transport</keyword>
<protein>
    <recommendedName>
        <fullName evidence="4">GPI inositol-deacylase</fullName>
        <ecNumber evidence="3">3.1.-.-</ecNumber>
    </recommendedName>
    <alternativeName>
        <fullName>Post-GPI attachment to proteins factor 1</fullName>
    </alternativeName>
</protein>